<comment type="function">
    <text evidence="1">Beta-glucosidases are one of a number of cellulolytic enzymes involved in the degradation of cellulosic biomass. Catalyzes the last step releasing glucose from the inhibitory cellobiose (By similarity).</text>
</comment>
<comment type="catalytic activity">
    <reaction>
        <text>Hydrolysis of terminal, non-reducing beta-D-glucosyl residues with release of beta-D-glucose.</text>
        <dbReference type="EC" id="3.2.1.21"/>
    </reaction>
</comment>
<comment type="pathway">
    <text>Glycan metabolism; cellulose degradation.</text>
</comment>
<comment type="subcellular location">
    <subcellularLocation>
        <location evidence="1">Secreted</location>
    </subcellularLocation>
</comment>
<comment type="similarity">
    <text evidence="3">Belongs to the glycosyl hydrolase 3 family.</text>
</comment>
<feature type="signal peptide" evidence="2">
    <location>
        <begin position="1"/>
        <end position="20"/>
    </location>
</feature>
<feature type="chain" id="PRO_0000394909" description="Probable beta-glucosidase M">
    <location>
        <begin position="21"/>
        <end position="772"/>
    </location>
</feature>
<feature type="active site" evidence="1">
    <location>
        <position position="287"/>
    </location>
</feature>
<feature type="glycosylation site" description="N-linked (GlcNAc...) asparagine" evidence="2">
    <location>
        <position position="259"/>
    </location>
</feature>
<feature type="glycosylation site" description="N-linked (GlcNAc...) asparagine" evidence="2">
    <location>
        <position position="315"/>
    </location>
</feature>
<feature type="glycosylation site" description="N-linked (GlcNAc...) asparagine" evidence="2">
    <location>
        <position position="322"/>
    </location>
</feature>
<feature type="glycosylation site" description="N-linked (GlcNAc...) asparagine" evidence="2">
    <location>
        <position position="438"/>
    </location>
</feature>
<feature type="glycosylation site" description="N-linked (GlcNAc...) asparagine" evidence="2">
    <location>
        <position position="523"/>
    </location>
</feature>
<feature type="glycosylation site" description="N-linked (GlcNAc...) asparagine" evidence="2">
    <location>
        <position position="547"/>
    </location>
</feature>
<feature type="glycosylation site" description="N-linked (GlcNAc...) asparagine" evidence="2">
    <location>
        <position position="574"/>
    </location>
</feature>
<feature type="glycosylation site" description="N-linked (GlcNAc...) asparagine" evidence="2">
    <location>
        <position position="586"/>
    </location>
</feature>
<accession>Q5AWD4</accession>
<accession>C8VCE8</accession>
<organism>
    <name type="scientific">Emericella nidulans (strain FGSC A4 / ATCC 38163 / CBS 112.46 / NRRL 194 / M139)</name>
    <name type="common">Aspergillus nidulans</name>
    <dbReference type="NCBI Taxonomy" id="227321"/>
    <lineage>
        <taxon>Eukaryota</taxon>
        <taxon>Fungi</taxon>
        <taxon>Dikarya</taxon>
        <taxon>Ascomycota</taxon>
        <taxon>Pezizomycotina</taxon>
        <taxon>Eurotiomycetes</taxon>
        <taxon>Eurotiomycetidae</taxon>
        <taxon>Eurotiales</taxon>
        <taxon>Aspergillaceae</taxon>
        <taxon>Aspergillus</taxon>
        <taxon>Aspergillus subgen. Nidulantes</taxon>
    </lineage>
</organism>
<evidence type="ECO:0000250" key="1"/>
<evidence type="ECO:0000255" key="2"/>
<evidence type="ECO:0000305" key="3"/>
<keyword id="KW-0119">Carbohydrate metabolism</keyword>
<keyword id="KW-0136">Cellulose degradation</keyword>
<keyword id="KW-0325">Glycoprotein</keyword>
<keyword id="KW-0326">Glycosidase</keyword>
<keyword id="KW-0378">Hydrolase</keyword>
<keyword id="KW-0624">Polysaccharide degradation</keyword>
<keyword id="KW-1185">Reference proteome</keyword>
<keyword id="KW-0964">Secreted</keyword>
<keyword id="KW-0732">Signal</keyword>
<gene>
    <name type="primary">bglM</name>
    <name type="ORF">AN7396</name>
</gene>
<dbReference type="EC" id="3.2.1.21"/>
<dbReference type="EMBL" id="AACD01000128">
    <property type="protein sequence ID" value="EAA61767.1"/>
    <property type="molecule type" value="Genomic_DNA"/>
</dbReference>
<dbReference type="EMBL" id="BN001304">
    <property type="protein sequence ID" value="CBF78465.1"/>
    <property type="molecule type" value="Genomic_DNA"/>
</dbReference>
<dbReference type="RefSeq" id="XP_680665.1">
    <property type="nucleotide sequence ID" value="XM_675573.1"/>
</dbReference>
<dbReference type="SMR" id="Q5AWD4"/>
<dbReference type="STRING" id="227321.Q5AWD4"/>
<dbReference type="CAZy" id="GH3">
    <property type="family name" value="Glycoside Hydrolase Family 3"/>
</dbReference>
<dbReference type="GlyCosmos" id="Q5AWD4">
    <property type="glycosylation" value="8 sites, No reported glycans"/>
</dbReference>
<dbReference type="EnsemblFungi" id="CBF78465">
    <property type="protein sequence ID" value="CBF78465"/>
    <property type="gene ID" value="ANIA_07396"/>
</dbReference>
<dbReference type="KEGG" id="ani:ANIA_07396"/>
<dbReference type="VEuPathDB" id="FungiDB:AN7396"/>
<dbReference type="eggNOG" id="ENOG502SMNU">
    <property type="taxonomic scope" value="Eukaryota"/>
</dbReference>
<dbReference type="HOGENOM" id="CLU_004542_2_1_1"/>
<dbReference type="InParanoid" id="Q5AWD4"/>
<dbReference type="OMA" id="PGLCVSD"/>
<dbReference type="OrthoDB" id="416222at2759"/>
<dbReference type="UniPathway" id="UPA00696"/>
<dbReference type="Proteomes" id="UP000000560">
    <property type="component" value="Chromosome IV"/>
</dbReference>
<dbReference type="GO" id="GO:0005576">
    <property type="term" value="C:extracellular region"/>
    <property type="evidence" value="ECO:0007669"/>
    <property type="project" value="UniProtKB-SubCell"/>
</dbReference>
<dbReference type="GO" id="GO:0008422">
    <property type="term" value="F:beta-glucosidase activity"/>
    <property type="evidence" value="ECO:0000318"/>
    <property type="project" value="GO_Central"/>
</dbReference>
<dbReference type="GO" id="GO:0030245">
    <property type="term" value="P:cellulose catabolic process"/>
    <property type="evidence" value="ECO:0007669"/>
    <property type="project" value="UniProtKB-UniPathway"/>
</dbReference>
<dbReference type="GO" id="GO:0009251">
    <property type="term" value="P:glucan catabolic process"/>
    <property type="evidence" value="ECO:0000318"/>
    <property type="project" value="GO_Central"/>
</dbReference>
<dbReference type="FunFam" id="2.60.40.10:FF:000757">
    <property type="entry name" value="Beta-glucosidase G"/>
    <property type="match status" value="1"/>
</dbReference>
<dbReference type="FunFam" id="3.20.20.300:FF:000002">
    <property type="entry name" value="Probable beta-glucosidase"/>
    <property type="match status" value="1"/>
</dbReference>
<dbReference type="Gene3D" id="3.40.50.1700">
    <property type="entry name" value="Glycoside hydrolase family 3 C-terminal domain"/>
    <property type="match status" value="1"/>
</dbReference>
<dbReference type="Gene3D" id="3.20.20.300">
    <property type="entry name" value="Glycoside hydrolase, family 3, N-terminal domain"/>
    <property type="match status" value="1"/>
</dbReference>
<dbReference type="Gene3D" id="2.60.40.10">
    <property type="entry name" value="Immunoglobulins"/>
    <property type="match status" value="1"/>
</dbReference>
<dbReference type="InterPro" id="IPR050288">
    <property type="entry name" value="Cellulose_deg_GH3"/>
</dbReference>
<dbReference type="InterPro" id="IPR026891">
    <property type="entry name" value="Fn3-like"/>
</dbReference>
<dbReference type="InterPro" id="IPR002772">
    <property type="entry name" value="Glyco_hydro_3_C"/>
</dbReference>
<dbReference type="InterPro" id="IPR036881">
    <property type="entry name" value="Glyco_hydro_3_C_sf"/>
</dbReference>
<dbReference type="InterPro" id="IPR001764">
    <property type="entry name" value="Glyco_hydro_3_N"/>
</dbReference>
<dbReference type="InterPro" id="IPR036962">
    <property type="entry name" value="Glyco_hydro_3_N_sf"/>
</dbReference>
<dbReference type="InterPro" id="IPR017853">
    <property type="entry name" value="Glycoside_hydrolase_SF"/>
</dbReference>
<dbReference type="InterPro" id="IPR013783">
    <property type="entry name" value="Ig-like_fold"/>
</dbReference>
<dbReference type="PANTHER" id="PTHR42715">
    <property type="entry name" value="BETA-GLUCOSIDASE"/>
    <property type="match status" value="1"/>
</dbReference>
<dbReference type="PANTHER" id="PTHR42715:SF5">
    <property type="entry name" value="BETA-GLUCOSIDASE M-RELATED"/>
    <property type="match status" value="1"/>
</dbReference>
<dbReference type="Pfam" id="PF14310">
    <property type="entry name" value="Fn3-like"/>
    <property type="match status" value="1"/>
</dbReference>
<dbReference type="Pfam" id="PF00933">
    <property type="entry name" value="Glyco_hydro_3"/>
    <property type="match status" value="1"/>
</dbReference>
<dbReference type="Pfam" id="PF01915">
    <property type="entry name" value="Glyco_hydro_3_C"/>
    <property type="match status" value="1"/>
</dbReference>
<dbReference type="PRINTS" id="PR00133">
    <property type="entry name" value="GLHYDRLASE3"/>
</dbReference>
<dbReference type="SMART" id="SM01217">
    <property type="entry name" value="Fn3_like"/>
    <property type="match status" value="1"/>
</dbReference>
<dbReference type="SUPFAM" id="SSF51445">
    <property type="entry name" value="(Trans)glycosidases"/>
    <property type="match status" value="1"/>
</dbReference>
<dbReference type="SUPFAM" id="SSF52279">
    <property type="entry name" value="Beta-D-glucan exohydrolase, C-terminal domain"/>
    <property type="match status" value="1"/>
</dbReference>
<proteinExistence type="inferred from homology"/>
<reference key="1">
    <citation type="journal article" date="2005" name="Nature">
        <title>Sequencing of Aspergillus nidulans and comparative analysis with A. fumigatus and A. oryzae.</title>
        <authorList>
            <person name="Galagan J.E."/>
            <person name="Calvo S.E."/>
            <person name="Cuomo C."/>
            <person name="Ma L.-J."/>
            <person name="Wortman J.R."/>
            <person name="Batzoglou S."/>
            <person name="Lee S.-I."/>
            <person name="Bastuerkmen M."/>
            <person name="Spevak C.C."/>
            <person name="Clutterbuck J."/>
            <person name="Kapitonov V."/>
            <person name="Jurka J."/>
            <person name="Scazzocchio C."/>
            <person name="Farman M.L."/>
            <person name="Butler J."/>
            <person name="Purcell S."/>
            <person name="Harris S."/>
            <person name="Braus G.H."/>
            <person name="Draht O."/>
            <person name="Busch S."/>
            <person name="D'Enfert C."/>
            <person name="Bouchier C."/>
            <person name="Goldman G.H."/>
            <person name="Bell-Pedersen D."/>
            <person name="Griffiths-Jones S."/>
            <person name="Doonan J.H."/>
            <person name="Yu J."/>
            <person name="Vienken K."/>
            <person name="Pain A."/>
            <person name="Freitag M."/>
            <person name="Selker E.U."/>
            <person name="Archer D.B."/>
            <person name="Penalva M.A."/>
            <person name="Oakley B.R."/>
            <person name="Momany M."/>
            <person name="Tanaka T."/>
            <person name="Kumagai T."/>
            <person name="Asai K."/>
            <person name="Machida M."/>
            <person name="Nierman W.C."/>
            <person name="Denning D.W."/>
            <person name="Caddick M.X."/>
            <person name="Hynes M."/>
            <person name="Paoletti M."/>
            <person name="Fischer R."/>
            <person name="Miller B.L."/>
            <person name="Dyer P.S."/>
            <person name="Sachs M.S."/>
            <person name="Osmani S.A."/>
            <person name="Birren B.W."/>
        </authorList>
    </citation>
    <scope>NUCLEOTIDE SEQUENCE [LARGE SCALE GENOMIC DNA]</scope>
    <source>
        <strain>FGSC A4 / ATCC 38163 / CBS 112.46 / NRRL 194 / M139</strain>
    </source>
</reference>
<reference key="2">
    <citation type="journal article" date="2009" name="Fungal Genet. Biol.">
        <title>The 2008 update of the Aspergillus nidulans genome annotation: a community effort.</title>
        <authorList>
            <person name="Wortman J.R."/>
            <person name="Gilsenan J.M."/>
            <person name="Joardar V."/>
            <person name="Deegan J."/>
            <person name="Clutterbuck J."/>
            <person name="Andersen M.R."/>
            <person name="Archer D."/>
            <person name="Bencina M."/>
            <person name="Braus G."/>
            <person name="Coutinho P."/>
            <person name="von Dohren H."/>
            <person name="Doonan J."/>
            <person name="Driessen A.J."/>
            <person name="Durek P."/>
            <person name="Espeso E."/>
            <person name="Fekete E."/>
            <person name="Flipphi M."/>
            <person name="Estrada C.G."/>
            <person name="Geysens S."/>
            <person name="Goldman G."/>
            <person name="de Groot P.W."/>
            <person name="Hansen K."/>
            <person name="Harris S.D."/>
            <person name="Heinekamp T."/>
            <person name="Helmstaedt K."/>
            <person name="Henrissat B."/>
            <person name="Hofmann G."/>
            <person name="Homan T."/>
            <person name="Horio T."/>
            <person name="Horiuchi H."/>
            <person name="James S."/>
            <person name="Jones M."/>
            <person name="Karaffa L."/>
            <person name="Karanyi Z."/>
            <person name="Kato M."/>
            <person name="Keller N."/>
            <person name="Kelly D.E."/>
            <person name="Kiel J.A."/>
            <person name="Kim J.M."/>
            <person name="van der Klei I.J."/>
            <person name="Klis F.M."/>
            <person name="Kovalchuk A."/>
            <person name="Krasevec N."/>
            <person name="Kubicek C.P."/>
            <person name="Liu B."/>
            <person name="Maccabe A."/>
            <person name="Meyer V."/>
            <person name="Mirabito P."/>
            <person name="Miskei M."/>
            <person name="Mos M."/>
            <person name="Mullins J."/>
            <person name="Nelson D.R."/>
            <person name="Nielsen J."/>
            <person name="Oakley B.R."/>
            <person name="Osmani S.A."/>
            <person name="Pakula T."/>
            <person name="Paszewski A."/>
            <person name="Paulsen I."/>
            <person name="Pilsyk S."/>
            <person name="Pocsi I."/>
            <person name="Punt P.J."/>
            <person name="Ram A.F."/>
            <person name="Ren Q."/>
            <person name="Robellet X."/>
            <person name="Robson G."/>
            <person name="Seiboth B."/>
            <person name="van Solingen P."/>
            <person name="Specht T."/>
            <person name="Sun J."/>
            <person name="Taheri-Talesh N."/>
            <person name="Takeshita N."/>
            <person name="Ussery D."/>
            <person name="vanKuyk P.A."/>
            <person name="Visser H."/>
            <person name="van de Vondervoort P.J."/>
            <person name="de Vries R.P."/>
            <person name="Walton J."/>
            <person name="Xiang X."/>
            <person name="Xiong Y."/>
            <person name="Zeng A.P."/>
            <person name="Brandt B.W."/>
            <person name="Cornell M.J."/>
            <person name="van den Hondel C.A."/>
            <person name="Visser J."/>
            <person name="Oliver S.G."/>
            <person name="Turner G."/>
        </authorList>
    </citation>
    <scope>GENOME REANNOTATION</scope>
    <source>
        <strain>FGSC A4 / ATCC 38163 / CBS 112.46 / NRRL 194 / M139</strain>
    </source>
</reference>
<protein>
    <recommendedName>
        <fullName>Probable beta-glucosidase M</fullName>
        <ecNumber>3.2.1.21</ecNumber>
    </recommendedName>
    <alternativeName>
        <fullName>Beta-D-glucoside glucohydrolase M</fullName>
    </alternativeName>
    <alternativeName>
        <fullName>Cellobiase M</fullName>
    </alternativeName>
    <alternativeName>
        <fullName>Gentiobiase M</fullName>
    </alternativeName>
</protein>
<sequence>MLTSWGKTGFVLALALGGRAAENVITSDTFFYGESPPVYPSPEGTGAGDWASAYTKARAFVAQLSDDEKIQLTAGVSSNTACSGFIQPIDRLGFPGICMSDAGNGLRGTDYVNGWSSGISVGASWNRDLAHSRGAYMGQEYRKKGVNMILGPVVGPLGRVALGGRNWEGYAADPYLSGVLVSESVKGLQSQKVATSVKHFIANEQETNRNPTTDSERNVVQSVSSNIDDKTMHELYLWPFQDAVLAGATNLMCSYNRVNNSYACQNSKLLNGVLKTELGFQGYVVTDWGAQHAGIASANAGLDVVMPRSSTWNSNLTTAIANGTMEASRLDDMITRLMATWYYLDQDTEFPSPGVGMPSSPSAAHQAVIATSPEAKPILLQSAIESHVLVKNTDGALPLKSPKLISVFGYDAYAPLTYDLGNNFDFSSTRVRSDLYKNGTLYVGGGSGLNSPAYIDAPIDAIKRRAYEDGSSVLWDFTSENPSVDYTSDVCLVFINAYATEGYDRQALSDTHSDSVVENIAGNCSNTIVVVHNAGIRTAEAWVDHANVTAIIYAHLPGQDIGRALVRLLYGESNFSGRLPYTVAKNSSDYGSLLEPSQPEGKYQYFPQSDFSEGVYIDYRAFDKDGIVPQYAFGYGLSYTTFEYSDLKISKNSDGVPSIYPAKASILPGGNPHLFDELVTVTAKIRNTGNVDGQEVAQLYVGIPDGPVRQLRGFDKVLIESGSSATVTFSLTRRDLSTWDANAQEWSLQRGTYKIFVGRDSRDLPLEETLVF</sequence>
<name>BGLM_EMENI</name>